<feature type="transit peptide" description="Chloroplast" evidence="2">
    <location>
        <begin position="1"/>
        <end position="58"/>
    </location>
</feature>
<feature type="chain" id="PRO_0000433441" description="Protein RETICULATA-RELATED 2, chloroplastic" evidence="2">
    <location>
        <begin position="59"/>
        <end position="339"/>
    </location>
</feature>
<feature type="transmembrane region" description="Helical" evidence="2">
    <location>
        <begin position="148"/>
        <end position="168"/>
    </location>
</feature>
<feature type="transmembrane region" description="Helical" evidence="2">
    <location>
        <begin position="213"/>
        <end position="233"/>
    </location>
</feature>
<feature type="region of interest" description="Disordered" evidence="3">
    <location>
        <begin position="68"/>
        <end position="92"/>
    </location>
</feature>
<feature type="compositionally biased region" description="Gly residues" evidence="3">
    <location>
        <begin position="68"/>
        <end position="86"/>
    </location>
</feature>
<feature type="sequence conflict" description="In Ref. 4; BAF00063." evidence="6" ref="4">
    <original>A</original>
    <variation>T</variation>
    <location>
        <position position="33"/>
    </location>
</feature>
<accession>Q9C9Z3</accession>
<accession>Q0WS36</accession>
<keyword id="KW-0150">Chloroplast</keyword>
<keyword id="KW-0217">Developmental protein</keyword>
<keyword id="KW-0472">Membrane</keyword>
<keyword id="KW-0934">Plastid</keyword>
<keyword id="KW-1185">Reference proteome</keyword>
<keyword id="KW-0809">Transit peptide</keyword>
<keyword id="KW-0812">Transmembrane</keyword>
<keyword id="KW-1133">Transmembrane helix</keyword>
<dbReference type="EMBL" id="AC012562">
    <property type="protein sequence ID" value="AAG51344.1"/>
    <property type="molecule type" value="Genomic_DNA"/>
</dbReference>
<dbReference type="EMBL" id="CP002686">
    <property type="protein sequence ID" value="AEE74655.1"/>
    <property type="molecule type" value="Genomic_DNA"/>
</dbReference>
<dbReference type="EMBL" id="BT012218">
    <property type="protein sequence ID" value="AAS76705.1"/>
    <property type="molecule type" value="mRNA"/>
</dbReference>
<dbReference type="EMBL" id="BT012416">
    <property type="protein sequence ID" value="AAS92332.1"/>
    <property type="molecule type" value="mRNA"/>
</dbReference>
<dbReference type="EMBL" id="AK228104">
    <property type="protein sequence ID" value="BAF00063.1"/>
    <property type="molecule type" value="mRNA"/>
</dbReference>
<dbReference type="RefSeq" id="NP_187475.1">
    <property type="nucleotide sequence ID" value="NM_111697.3"/>
</dbReference>
<dbReference type="FunCoup" id="Q9C9Z3">
    <property type="interactions" value="533"/>
</dbReference>
<dbReference type="IntAct" id="Q9C9Z3">
    <property type="interactions" value="1"/>
</dbReference>
<dbReference type="STRING" id="3702.Q9C9Z3"/>
<dbReference type="MetOSite" id="Q9C9Z3"/>
<dbReference type="PaxDb" id="3702-AT3G08630.1"/>
<dbReference type="ProteomicsDB" id="234724"/>
<dbReference type="EnsemblPlants" id="AT3G08630.1">
    <property type="protein sequence ID" value="AT3G08630.1"/>
    <property type="gene ID" value="AT3G08630"/>
</dbReference>
<dbReference type="GeneID" id="820010"/>
<dbReference type="Gramene" id="AT3G08630.1">
    <property type="protein sequence ID" value="AT3G08630.1"/>
    <property type="gene ID" value="AT3G08630"/>
</dbReference>
<dbReference type="KEGG" id="ath:AT3G08630"/>
<dbReference type="Araport" id="AT3G08630"/>
<dbReference type="TAIR" id="AT3G08630">
    <property type="gene designation" value="RER2"/>
</dbReference>
<dbReference type="eggNOG" id="ENOG502QRRA">
    <property type="taxonomic scope" value="Eukaryota"/>
</dbReference>
<dbReference type="HOGENOM" id="CLU_036961_0_0_1"/>
<dbReference type="InParanoid" id="Q9C9Z3"/>
<dbReference type="OMA" id="ACPASHM"/>
<dbReference type="OrthoDB" id="497268at2759"/>
<dbReference type="PhylomeDB" id="Q9C9Z3"/>
<dbReference type="PRO" id="PR:Q9C9Z3"/>
<dbReference type="Proteomes" id="UP000006548">
    <property type="component" value="Chromosome 3"/>
</dbReference>
<dbReference type="ExpressionAtlas" id="Q9C9Z3">
    <property type="expression patterns" value="baseline and differential"/>
</dbReference>
<dbReference type="GO" id="GO:0031969">
    <property type="term" value="C:chloroplast membrane"/>
    <property type="evidence" value="ECO:0007669"/>
    <property type="project" value="UniProtKB-SubCell"/>
</dbReference>
<dbReference type="GO" id="GO:0009536">
    <property type="term" value="C:plastid"/>
    <property type="evidence" value="ECO:0007005"/>
    <property type="project" value="TAIR"/>
</dbReference>
<dbReference type="InterPro" id="IPR021825">
    <property type="entry name" value="RETICULATA-related"/>
</dbReference>
<dbReference type="PANTHER" id="PTHR31620">
    <property type="entry name" value="PROTEIN RETICULATA-RELATED 2, CHLOROPLASTIC-RELATED"/>
    <property type="match status" value="1"/>
</dbReference>
<dbReference type="PANTHER" id="PTHR31620:SF15">
    <property type="entry name" value="PROTEIN RETICULATA-RELATED 2, CHLOROPLASTIC-RELATED"/>
    <property type="match status" value="1"/>
</dbReference>
<dbReference type="Pfam" id="PF11891">
    <property type="entry name" value="RETICULATA-like"/>
    <property type="match status" value="1"/>
</dbReference>
<protein>
    <recommendedName>
        <fullName evidence="4">Protein RETICULATA-RELATED 2, chloroplastic</fullName>
    </recommendedName>
</protein>
<comment type="function">
    <text evidence="7">May play a role in leaf development.</text>
</comment>
<comment type="subcellular location">
    <subcellularLocation>
        <location evidence="1">Plastid</location>
        <location evidence="1">Chloroplast membrane</location>
        <topology evidence="2">Multi-pass membrane protein</topology>
    </subcellularLocation>
</comment>
<comment type="similarity">
    <text evidence="6">Belongs to the RETICULATA family.</text>
</comment>
<name>RER2_ARATH</name>
<reference key="1">
    <citation type="journal article" date="2000" name="Nature">
        <title>Sequence and analysis of chromosome 3 of the plant Arabidopsis thaliana.</title>
        <authorList>
            <person name="Salanoubat M."/>
            <person name="Lemcke K."/>
            <person name="Rieger M."/>
            <person name="Ansorge W."/>
            <person name="Unseld M."/>
            <person name="Fartmann B."/>
            <person name="Valle G."/>
            <person name="Bloecker H."/>
            <person name="Perez-Alonso M."/>
            <person name="Obermaier B."/>
            <person name="Delseny M."/>
            <person name="Boutry M."/>
            <person name="Grivell L.A."/>
            <person name="Mache R."/>
            <person name="Puigdomenech P."/>
            <person name="De Simone V."/>
            <person name="Choisne N."/>
            <person name="Artiguenave F."/>
            <person name="Robert C."/>
            <person name="Brottier P."/>
            <person name="Wincker P."/>
            <person name="Cattolico L."/>
            <person name="Weissenbach J."/>
            <person name="Saurin W."/>
            <person name="Quetier F."/>
            <person name="Schaefer M."/>
            <person name="Mueller-Auer S."/>
            <person name="Gabel C."/>
            <person name="Fuchs M."/>
            <person name="Benes V."/>
            <person name="Wurmbach E."/>
            <person name="Drzonek H."/>
            <person name="Erfle H."/>
            <person name="Jordan N."/>
            <person name="Bangert S."/>
            <person name="Wiedelmann R."/>
            <person name="Kranz H."/>
            <person name="Voss H."/>
            <person name="Holland R."/>
            <person name="Brandt P."/>
            <person name="Nyakatura G."/>
            <person name="Vezzi A."/>
            <person name="D'Angelo M."/>
            <person name="Pallavicini A."/>
            <person name="Toppo S."/>
            <person name="Simionati B."/>
            <person name="Conrad A."/>
            <person name="Hornischer K."/>
            <person name="Kauer G."/>
            <person name="Loehnert T.-H."/>
            <person name="Nordsiek G."/>
            <person name="Reichelt J."/>
            <person name="Scharfe M."/>
            <person name="Schoen O."/>
            <person name="Bargues M."/>
            <person name="Terol J."/>
            <person name="Climent J."/>
            <person name="Navarro P."/>
            <person name="Collado C."/>
            <person name="Perez-Perez A."/>
            <person name="Ottenwaelder B."/>
            <person name="Duchemin D."/>
            <person name="Cooke R."/>
            <person name="Laudie M."/>
            <person name="Berger-Llauro C."/>
            <person name="Purnelle B."/>
            <person name="Masuy D."/>
            <person name="de Haan M."/>
            <person name="Maarse A.C."/>
            <person name="Alcaraz J.-P."/>
            <person name="Cottet A."/>
            <person name="Casacuberta E."/>
            <person name="Monfort A."/>
            <person name="Argiriou A."/>
            <person name="Flores M."/>
            <person name="Liguori R."/>
            <person name="Vitale D."/>
            <person name="Mannhaupt G."/>
            <person name="Haase D."/>
            <person name="Schoof H."/>
            <person name="Rudd S."/>
            <person name="Zaccaria P."/>
            <person name="Mewes H.-W."/>
            <person name="Mayer K.F.X."/>
            <person name="Kaul S."/>
            <person name="Town C.D."/>
            <person name="Koo H.L."/>
            <person name="Tallon L.J."/>
            <person name="Jenkins J."/>
            <person name="Rooney T."/>
            <person name="Rizzo M."/>
            <person name="Walts A."/>
            <person name="Utterback T."/>
            <person name="Fujii C.Y."/>
            <person name="Shea T.P."/>
            <person name="Creasy T.H."/>
            <person name="Haas B."/>
            <person name="Maiti R."/>
            <person name="Wu D."/>
            <person name="Peterson J."/>
            <person name="Van Aken S."/>
            <person name="Pai G."/>
            <person name="Militscher J."/>
            <person name="Sellers P."/>
            <person name="Gill J.E."/>
            <person name="Feldblyum T.V."/>
            <person name="Preuss D."/>
            <person name="Lin X."/>
            <person name="Nierman W.C."/>
            <person name="Salzberg S.L."/>
            <person name="White O."/>
            <person name="Venter J.C."/>
            <person name="Fraser C.M."/>
            <person name="Kaneko T."/>
            <person name="Nakamura Y."/>
            <person name="Sato S."/>
            <person name="Kato T."/>
            <person name="Asamizu E."/>
            <person name="Sasamoto S."/>
            <person name="Kimura T."/>
            <person name="Idesawa K."/>
            <person name="Kawashima K."/>
            <person name="Kishida Y."/>
            <person name="Kiyokawa C."/>
            <person name="Kohara M."/>
            <person name="Matsumoto M."/>
            <person name="Matsuno A."/>
            <person name="Muraki A."/>
            <person name="Nakayama S."/>
            <person name="Nakazaki N."/>
            <person name="Shinpo S."/>
            <person name="Takeuchi C."/>
            <person name="Wada T."/>
            <person name="Watanabe A."/>
            <person name="Yamada M."/>
            <person name="Yasuda M."/>
            <person name="Tabata S."/>
        </authorList>
    </citation>
    <scope>NUCLEOTIDE SEQUENCE [LARGE SCALE GENOMIC DNA]</scope>
    <source>
        <strain>cv. Columbia</strain>
    </source>
</reference>
<reference key="2">
    <citation type="journal article" date="2017" name="Plant J.">
        <title>Araport11: a complete reannotation of the Arabidopsis thaliana reference genome.</title>
        <authorList>
            <person name="Cheng C.Y."/>
            <person name="Krishnakumar V."/>
            <person name="Chan A.P."/>
            <person name="Thibaud-Nissen F."/>
            <person name="Schobel S."/>
            <person name="Town C.D."/>
        </authorList>
    </citation>
    <scope>GENOME REANNOTATION</scope>
    <source>
        <strain>cv. Columbia</strain>
    </source>
</reference>
<reference key="3">
    <citation type="submission" date="2004-04" db="EMBL/GenBank/DDBJ databases">
        <title>Arabidopsis ORF clones.</title>
        <authorList>
            <person name="Shinn P."/>
            <person name="Chen H."/>
            <person name="Cheuk R.F."/>
            <person name="Kim C.J."/>
            <person name="Ecker J.R."/>
        </authorList>
    </citation>
    <scope>NUCLEOTIDE SEQUENCE [LARGE SCALE MRNA]</scope>
    <source>
        <strain>cv. Columbia</strain>
    </source>
</reference>
<reference key="4">
    <citation type="submission" date="2006-07" db="EMBL/GenBank/DDBJ databases">
        <title>Large-scale analysis of RIKEN Arabidopsis full-length (RAFL) cDNAs.</title>
        <authorList>
            <person name="Totoki Y."/>
            <person name="Seki M."/>
            <person name="Ishida J."/>
            <person name="Nakajima M."/>
            <person name="Enju A."/>
            <person name="Kamiya A."/>
            <person name="Narusaka M."/>
            <person name="Shin-i T."/>
            <person name="Nakagawa M."/>
            <person name="Sakamoto N."/>
            <person name="Oishi K."/>
            <person name="Kohara Y."/>
            <person name="Kobayashi M."/>
            <person name="Toyoda A."/>
            <person name="Sakaki Y."/>
            <person name="Sakurai T."/>
            <person name="Iida K."/>
            <person name="Akiyama K."/>
            <person name="Satou M."/>
            <person name="Toyoda T."/>
            <person name="Konagaya A."/>
            <person name="Carninci P."/>
            <person name="Kawai J."/>
            <person name="Hayashizaki Y."/>
            <person name="Shinozaki K."/>
        </authorList>
    </citation>
    <scope>NUCLEOTIDE SEQUENCE [LARGE SCALE MRNA]</scope>
    <source>
        <strain>cv. Columbia</strain>
    </source>
</reference>
<reference key="5">
    <citation type="journal article" date="2013" name="Plant Physiol.">
        <title>Functional redundancy and divergence within the Arabidopsis RETICULATA-RELATED gene family.</title>
        <authorList>
            <person name="Perez-Perez J.M."/>
            <person name="Esteve-Bruna D."/>
            <person name="Gonzalez-Bayon R."/>
            <person name="Kangasjarvi S."/>
            <person name="Caldana C."/>
            <person name="Hannah M.A."/>
            <person name="Willmitzer L."/>
            <person name="Ponce M.R."/>
            <person name="Micol J.L."/>
        </authorList>
    </citation>
    <scope>GENE FAMILY</scope>
    <scope>NOMENCLATURE</scope>
    <scope>FUNCTION</scope>
</reference>
<proteinExistence type="evidence at transcript level"/>
<evidence type="ECO:0000250" key="1">
    <source>
        <dbReference type="UniProtKB" id="Q9C9Z2"/>
    </source>
</evidence>
<evidence type="ECO:0000255" key="2"/>
<evidence type="ECO:0000256" key="3">
    <source>
        <dbReference type="SAM" id="MobiDB-lite"/>
    </source>
</evidence>
<evidence type="ECO:0000303" key="4">
    <source>
    </source>
</evidence>
<evidence type="ECO:0000303" key="5">
    <source>
    </source>
</evidence>
<evidence type="ECO:0000305" key="6"/>
<evidence type="ECO:0000305" key="7">
    <source>
    </source>
</evidence>
<evidence type="ECO:0000312" key="8">
    <source>
        <dbReference type="Araport" id="AT3G08630"/>
    </source>
</evidence>
<evidence type="ECO:0000312" key="9">
    <source>
        <dbReference type="EMBL" id="AAG51344.1"/>
    </source>
</evidence>
<evidence type="ECO:0000312" key="10">
    <source>
        <dbReference type="EMBL" id="AEE74655.1"/>
    </source>
</evidence>
<organism>
    <name type="scientific">Arabidopsis thaliana</name>
    <name type="common">Mouse-ear cress</name>
    <dbReference type="NCBI Taxonomy" id="3702"/>
    <lineage>
        <taxon>Eukaryota</taxon>
        <taxon>Viridiplantae</taxon>
        <taxon>Streptophyta</taxon>
        <taxon>Embryophyta</taxon>
        <taxon>Tracheophyta</taxon>
        <taxon>Spermatophyta</taxon>
        <taxon>Magnoliopsida</taxon>
        <taxon>eudicotyledons</taxon>
        <taxon>Gunneridae</taxon>
        <taxon>Pentapetalae</taxon>
        <taxon>rosids</taxon>
        <taxon>malvids</taxon>
        <taxon>Brassicales</taxon>
        <taxon>Brassicaceae</taxon>
        <taxon>Camelineae</taxon>
        <taxon>Arabidopsis</taxon>
    </lineage>
</organism>
<gene>
    <name evidence="5" type="primary">RER2</name>
    <name evidence="8 10" type="ordered locus">At3g08630</name>
    <name evidence="9" type="ORF">F17O14.10</name>
</gene>
<sequence length="339" mass="35950">MAAMAAKLHISTKSDQSNVRLPRLINLSRDPTARVLFPRNGSVSSLHTNFSSPNIMVPCAGGGGGGSIGNHGGGSGSGGGGGGYGGSEEEESSPWGPLGLFIQGWRSRVAADSQFPFKVLMEMLVGVSANVLGDMASRPNFGLNELDFVFSTLVVGSILNFTLMYLLAPSAISHGSSNLLPGIFRSCPSSHMFEQGNFTLMNRFGTLVYKGMVFATVGLAAGLVGTAISNGLIMLRKKIDPSFETPNKPPPTLLNSLTWATHMGVSANVRYQTLNGAEFLLEKSLPPLVFKTSVIALRVVNNVLGGMSFVTLARMTGSQSVEEEKKIEMSEISEKEKED</sequence>